<name>RUTF_KLEP7</name>
<dbReference type="EC" id="1.5.1.42" evidence="1"/>
<dbReference type="EMBL" id="CP000647">
    <property type="protein sequence ID" value="ABR76468.1"/>
    <property type="molecule type" value="Genomic_DNA"/>
</dbReference>
<dbReference type="RefSeq" id="WP_004176611.1">
    <property type="nucleotide sequence ID" value="NC_009648.1"/>
</dbReference>
<dbReference type="SMR" id="A6T797"/>
<dbReference type="STRING" id="272620.KPN_01033"/>
<dbReference type="PaxDb" id="272620-KPN_01033"/>
<dbReference type="EnsemblBacteria" id="ABR76468">
    <property type="protein sequence ID" value="ABR76468"/>
    <property type="gene ID" value="KPN_01033"/>
</dbReference>
<dbReference type="KEGG" id="kpn:KPN_01033"/>
<dbReference type="HOGENOM" id="CLU_059021_2_2_6"/>
<dbReference type="Proteomes" id="UP000000265">
    <property type="component" value="Chromosome"/>
</dbReference>
<dbReference type="GO" id="GO:0010181">
    <property type="term" value="F:FMN binding"/>
    <property type="evidence" value="ECO:0007669"/>
    <property type="project" value="InterPro"/>
</dbReference>
<dbReference type="GO" id="GO:0052874">
    <property type="term" value="F:FMN reductase (NADH) activity"/>
    <property type="evidence" value="ECO:0007669"/>
    <property type="project" value="UniProtKB-EC"/>
</dbReference>
<dbReference type="GO" id="GO:0008752">
    <property type="term" value="F:FMN reductase [NAD(P)H] activity"/>
    <property type="evidence" value="ECO:0007669"/>
    <property type="project" value="InterPro"/>
</dbReference>
<dbReference type="GO" id="GO:0042602">
    <property type="term" value="F:riboflavin reductase (NADPH) activity"/>
    <property type="evidence" value="ECO:0007669"/>
    <property type="project" value="UniProtKB-UniRule"/>
</dbReference>
<dbReference type="GO" id="GO:0019740">
    <property type="term" value="P:nitrogen utilization"/>
    <property type="evidence" value="ECO:0007669"/>
    <property type="project" value="UniProtKB-UniRule"/>
</dbReference>
<dbReference type="GO" id="GO:0006212">
    <property type="term" value="P:uracil catabolic process"/>
    <property type="evidence" value="ECO:0007669"/>
    <property type="project" value="UniProtKB-UniRule"/>
</dbReference>
<dbReference type="FunFam" id="2.30.110.10:FF:000002">
    <property type="entry name" value="FMN reductase (NADH) RutF"/>
    <property type="match status" value="1"/>
</dbReference>
<dbReference type="Gene3D" id="2.30.110.10">
    <property type="entry name" value="Electron Transport, Fmn-binding Protein, Chain A"/>
    <property type="match status" value="1"/>
</dbReference>
<dbReference type="HAMAP" id="MF_00833">
    <property type="entry name" value="RutF"/>
    <property type="match status" value="1"/>
</dbReference>
<dbReference type="InterPro" id="IPR002563">
    <property type="entry name" value="Flavin_Rdtase-like_dom"/>
</dbReference>
<dbReference type="InterPro" id="IPR050268">
    <property type="entry name" value="NADH-dep_flavin_reductase"/>
</dbReference>
<dbReference type="InterPro" id="IPR019917">
    <property type="entry name" value="RutF"/>
</dbReference>
<dbReference type="InterPro" id="IPR012349">
    <property type="entry name" value="Split_barrel_FMN-bd"/>
</dbReference>
<dbReference type="NCBIfam" id="TIGR03615">
    <property type="entry name" value="RutF"/>
    <property type="match status" value="1"/>
</dbReference>
<dbReference type="PANTHER" id="PTHR30466">
    <property type="entry name" value="FLAVIN REDUCTASE"/>
    <property type="match status" value="1"/>
</dbReference>
<dbReference type="PANTHER" id="PTHR30466:SF1">
    <property type="entry name" value="FMN REDUCTASE (NADH) RUTF"/>
    <property type="match status" value="1"/>
</dbReference>
<dbReference type="Pfam" id="PF01613">
    <property type="entry name" value="Flavin_Reduct"/>
    <property type="match status" value="1"/>
</dbReference>
<dbReference type="SMART" id="SM00903">
    <property type="entry name" value="Flavin_Reduct"/>
    <property type="match status" value="1"/>
</dbReference>
<dbReference type="SUPFAM" id="SSF50475">
    <property type="entry name" value="FMN-binding split barrel"/>
    <property type="match status" value="1"/>
</dbReference>
<gene>
    <name evidence="1" type="primary">rutF</name>
    <name type="ordered locus">KPN78578_10070</name>
    <name type="ORF">KPN_01033</name>
</gene>
<keyword id="KW-0285">Flavoprotein</keyword>
<keyword id="KW-0288">FMN</keyword>
<keyword id="KW-0520">NAD</keyword>
<keyword id="KW-0560">Oxidoreductase</keyword>
<proteinExistence type="inferred from homology"/>
<protein>
    <recommendedName>
        <fullName evidence="1">FMN reductase (NADH) RutF</fullName>
        <ecNumber evidence="1">1.5.1.42</ecNumber>
    </recommendedName>
    <alternativeName>
        <fullName evidence="1">FMN reductase</fullName>
    </alternativeName>
    <alternativeName>
        <fullName evidence="1">NADH-flavin reductase RutF</fullName>
    </alternativeName>
    <alternativeName>
        <fullName evidence="1">NADH:flavin oxidoreductase</fullName>
    </alternativeName>
</protein>
<sequence>MELTDKASFRDAMAHVGAAVNIITTDGPAGRAGFTASAVCSVTDTPPTLLVCLNRSASVWPVFSEHHTLCVNTLAAGQEALSTLFGGKTAMDERFAAADWQTGATGCPRLEAALVSFDCRIDQRVSVGTHDILFCHVVAITRHPEPRGLMWFDRGYHTLMRPAC</sequence>
<reference key="1">
    <citation type="submission" date="2006-09" db="EMBL/GenBank/DDBJ databases">
        <authorList>
            <consortium name="The Klebsiella pneumonia Genome Sequencing Project"/>
            <person name="McClelland M."/>
            <person name="Sanderson E.K."/>
            <person name="Spieth J."/>
            <person name="Clifton W.S."/>
            <person name="Latreille P."/>
            <person name="Sabo A."/>
            <person name="Pepin K."/>
            <person name="Bhonagiri V."/>
            <person name="Porwollik S."/>
            <person name="Ali J."/>
            <person name="Wilson R.K."/>
        </authorList>
    </citation>
    <scope>NUCLEOTIDE SEQUENCE [LARGE SCALE GENOMIC DNA]</scope>
    <source>
        <strain>ATCC 700721 / MGH 78578</strain>
    </source>
</reference>
<feature type="chain" id="PRO_0000403029" description="FMN reductase (NADH) RutF">
    <location>
        <begin position="1"/>
        <end position="164"/>
    </location>
</feature>
<comment type="function">
    <text evidence="1">Catalyzes the reduction of FMN to FMNH2 which is used to reduce pyrimidine by RutA via the Rut pathway.</text>
</comment>
<comment type="catalytic activity">
    <reaction evidence="1">
        <text>FMNH2 + NAD(+) = FMN + NADH + 2 H(+)</text>
        <dbReference type="Rhea" id="RHEA:21620"/>
        <dbReference type="ChEBI" id="CHEBI:15378"/>
        <dbReference type="ChEBI" id="CHEBI:57540"/>
        <dbReference type="ChEBI" id="CHEBI:57618"/>
        <dbReference type="ChEBI" id="CHEBI:57945"/>
        <dbReference type="ChEBI" id="CHEBI:58210"/>
        <dbReference type="EC" id="1.5.1.42"/>
    </reaction>
</comment>
<comment type="similarity">
    <text evidence="1">Belongs to the non-flavoprotein flavin reductase family. RutF subfamily.</text>
</comment>
<accession>A6T797</accession>
<organism>
    <name type="scientific">Klebsiella pneumoniae subsp. pneumoniae (strain ATCC 700721 / MGH 78578)</name>
    <dbReference type="NCBI Taxonomy" id="272620"/>
    <lineage>
        <taxon>Bacteria</taxon>
        <taxon>Pseudomonadati</taxon>
        <taxon>Pseudomonadota</taxon>
        <taxon>Gammaproteobacteria</taxon>
        <taxon>Enterobacterales</taxon>
        <taxon>Enterobacteriaceae</taxon>
        <taxon>Klebsiella/Raoultella group</taxon>
        <taxon>Klebsiella</taxon>
        <taxon>Klebsiella pneumoniae complex</taxon>
    </lineage>
</organism>
<evidence type="ECO:0000255" key="1">
    <source>
        <dbReference type="HAMAP-Rule" id="MF_00833"/>
    </source>
</evidence>